<name>QUEF_RALN1</name>
<reference key="1">
    <citation type="journal article" date="2002" name="Nature">
        <title>Genome sequence of the plant pathogen Ralstonia solanacearum.</title>
        <authorList>
            <person name="Salanoubat M."/>
            <person name="Genin S."/>
            <person name="Artiguenave F."/>
            <person name="Gouzy J."/>
            <person name="Mangenot S."/>
            <person name="Arlat M."/>
            <person name="Billault A."/>
            <person name="Brottier P."/>
            <person name="Camus J.-C."/>
            <person name="Cattolico L."/>
            <person name="Chandler M."/>
            <person name="Choisne N."/>
            <person name="Claudel-Renard C."/>
            <person name="Cunnac S."/>
            <person name="Demange N."/>
            <person name="Gaspin C."/>
            <person name="Lavie M."/>
            <person name="Moisan A."/>
            <person name="Robert C."/>
            <person name="Saurin W."/>
            <person name="Schiex T."/>
            <person name="Siguier P."/>
            <person name="Thebault P."/>
            <person name="Whalen M."/>
            <person name="Wincker P."/>
            <person name="Levy M."/>
            <person name="Weissenbach J."/>
            <person name="Boucher C.A."/>
        </authorList>
    </citation>
    <scope>NUCLEOTIDE SEQUENCE [LARGE SCALE GENOMIC DNA]</scope>
    <source>
        <strain>ATCC BAA-1114 / GMI1000</strain>
    </source>
</reference>
<sequence length="277" mass="31276">MSHPEHSPLGKASAYKTQYDPSLLFPIPRQAKRDEIGLAAGSALPFFGIDLWNLYELSWLNLKGKPQVAIGTVIVPADSPNIVESKSFKLYLNTFNQTKVASSEALQQLIHHDLSEACGAPVQVRIVPQEEFARQKMGELAGLSLDRLDVETDVYQPTPGLLHADQDESPVEEVLVSHLLKSNCLVTGQPDWGSVQIRYVGAPINQEGLLKYLISFREHNEFHEQCVERIFMDIQRQCRPVKLAVYARYTRRGGLDINPFRTNFNTPWPDNLRNARQ</sequence>
<dbReference type="EC" id="1.7.1.13" evidence="1"/>
<dbReference type="EMBL" id="AL646052">
    <property type="protein sequence ID" value="CAD13976.1"/>
    <property type="molecule type" value="Genomic_DNA"/>
</dbReference>
<dbReference type="RefSeq" id="WP_011000409.1">
    <property type="nucleotide sequence ID" value="NC_003295.1"/>
</dbReference>
<dbReference type="SMR" id="Q8Y288"/>
<dbReference type="STRING" id="267608.RSc0448"/>
<dbReference type="EnsemblBacteria" id="CAD13976">
    <property type="protein sequence ID" value="CAD13976"/>
    <property type="gene ID" value="RSc0448"/>
</dbReference>
<dbReference type="KEGG" id="rso:RSc0448"/>
<dbReference type="PATRIC" id="fig|267608.8.peg.463"/>
<dbReference type="eggNOG" id="COG0780">
    <property type="taxonomic scope" value="Bacteria"/>
</dbReference>
<dbReference type="eggNOG" id="COG2904">
    <property type="taxonomic scope" value="Bacteria"/>
</dbReference>
<dbReference type="HOGENOM" id="CLU_054738_0_0_4"/>
<dbReference type="UniPathway" id="UPA00392"/>
<dbReference type="Proteomes" id="UP000001436">
    <property type="component" value="Chromosome"/>
</dbReference>
<dbReference type="GO" id="GO:0005737">
    <property type="term" value="C:cytoplasm"/>
    <property type="evidence" value="ECO:0007669"/>
    <property type="project" value="UniProtKB-SubCell"/>
</dbReference>
<dbReference type="GO" id="GO:0033739">
    <property type="term" value="F:preQ1 synthase activity"/>
    <property type="evidence" value="ECO:0007669"/>
    <property type="project" value="UniProtKB-UniRule"/>
</dbReference>
<dbReference type="GO" id="GO:0008616">
    <property type="term" value="P:queuosine biosynthetic process"/>
    <property type="evidence" value="ECO:0007669"/>
    <property type="project" value="UniProtKB-UniRule"/>
</dbReference>
<dbReference type="GO" id="GO:0006400">
    <property type="term" value="P:tRNA modification"/>
    <property type="evidence" value="ECO:0007669"/>
    <property type="project" value="UniProtKB-UniRule"/>
</dbReference>
<dbReference type="Gene3D" id="3.30.1130.10">
    <property type="match status" value="2"/>
</dbReference>
<dbReference type="HAMAP" id="MF_00817">
    <property type="entry name" value="QueF_type2"/>
    <property type="match status" value="1"/>
</dbReference>
<dbReference type="InterPro" id="IPR043133">
    <property type="entry name" value="GTP-CH-I_C/QueF"/>
</dbReference>
<dbReference type="InterPro" id="IPR050084">
    <property type="entry name" value="NADPH_dep_7-cyano-7-deazaG_red"/>
</dbReference>
<dbReference type="InterPro" id="IPR029500">
    <property type="entry name" value="QueF"/>
</dbReference>
<dbReference type="InterPro" id="IPR029139">
    <property type="entry name" value="QueF_N"/>
</dbReference>
<dbReference type="InterPro" id="IPR016428">
    <property type="entry name" value="QueF_type2"/>
</dbReference>
<dbReference type="NCBIfam" id="TIGR03138">
    <property type="entry name" value="QueF"/>
    <property type="match status" value="1"/>
</dbReference>
<dbReference type="PANTHER" id="PTHR34354">
    <property type="entry name" value="NADPH-DEPENDENT 7-CYANO-7-DEAZAGUANINE REDUCTASE"/>
    <property type="match status" value="1"/>
</dbReference>
<dbReference type="PANTHER" id="PTHR34354:SF1">
    <property type="entry name" value="NADPH-DEPENDENT 7-CYANO-7-DEAZAGUANINE REDUCTASE"/>
    <property type="match status" value="1"/>
</dbReference>
<dbReference type="Pfam" id="PF14489">
    <property type="entry name" value="QueF"/>
    <property type="match status" value="1"/>
</dbReference>
<dbReference type="Pfam" id="PF14819">
    <property type="entry name" value="QueF_N"/>
    <property type="match status" value="1"/>
</dbReference>
<dbReference type="PIRSF" id="PIRSF004750">
    <property type="entry name" value="Nitrile_oxidored_YqcD_prd"/>
    <property type="match status" value="1"/>
</dbReference>
<dbReference type="SUPFAM" id="SSF55620">
    <property type="entry name" value="Tetrahydrobiopterin biosynthesis enzymes-like"/>
    <property type="match status" value="1"/>
</dbReference>
<protein>
    <recommendedName>
        <fullName evidence="1">NADPH-dependent 7-cyano-7-deazaguanine reductase</fullName>
        <ecNumber evidence="1">1.7.1.13</ecNumber>
    </recommendedName>
    <alternativeName>
        <fullName evidence="1">7-cyano-7-carbaguanine reductase</fullName>
    </alternativeName>
    <alternativeName>
        <fullName evidence="1">NADPH-dependent nitrile oxidoreductase</fullName>
    </alternativeName>
    <alternativeName>
        <fullName evidence="1">PreQ(0) reductase</fullName>
    </alternativeName>
</protein>
<organism>
    <name type="scientific">Ralstonia nicotianae (strain ATCC BAA-1114 / GMI1000)</name>
    <name type="common">Ralstonia solanacearum</name>
    <dbReference type="NCBI Taxonomy" id="267608"/>
    <lineage>
        <taxon>Bacteria</taxon>
        <taxon>Pseudomonadati</taxon>
        <taxon>Pseudomonadota</taxon>
        <taxon>Betaproteobacteria</taxon>
        <taxon>Burkholderiales</taxon>
        <taxon>Burkholderiaceae</taxon>
        <taxon>Ralstonia</taxon>
        <taxon>Ralstonia solanacearum species complex</taxon>
    </lineage>
</organism>
<proteinExistence type="inferred from homology"/>
<keyword id="KW-0963">Cytoplasm</keyword>
<keyword id="KW-0521">NADP</keyword>
<keyword id="KW-0560">Oxidoreductase</keyword>
<keyword id="KW-0671">Queuosine biosynthesis</keyword>
<keyword id="KW-1185">Reference proteome</keyword>
<feature type="chain" id="PRO_0000163051" description="NADPH-dependent 7-cyano-7-deazaguanine reductase">
    <location>
        <begin position="1"/>
        <end position="277"/>
    </location>
</feature>
<feature type="active site" description="Thioimide intermediate" evidence="1">
    <location>
        <position position="184"/>
    </location>
</feature>
<feature type="active site" description="Proton donor" evidence="1">
    <location>
        <position position="191"/>
    </location>
</feature>
<feature type="binding site" evidence="1">
    <location>
        <begin position="83"/>
        <end position="85"/>
    </location>
    <ligand>
        <name>substrate</name>
    </ligand>
</feature>
<feature type="binding site" evidence="1">
    <location>
        <begin position="85"/>
        <end position="86"/>
    </location>
    <ligand>
        <name>NADPH</name>
        <dbReference type="ChEBI" id="CHEBI:57783"/>
    </ligand>
</feature>
<feature type="binding site" evidence="1">
    <location>
        <begin position="223"/>
        <end position="224"/>
    </location>
    <ligand>
        <name>substrate</name>
    </ligand>
</feature>
<feature type="binding site" evidence="1">
    <location>
        <begin position="252"/>
        <end position="253"/>
    </location>
    <ligand>
        <name>NADPH</name>
        <dbReference type="ChEBI" id="CHEBI:57783"/>
    </ligand>
</feature>
<gene>
    <name evidence="1" type="primary">queF</name>
    <name type="ordered locus">RSc0448</name>
    <name type="ORF">RS04454</name>
</gene>
<evidence type="ECO:0000255" key="1">
    <source>
        <dbReference type="HAMAP-Rule" id="MF_00817"/>
    </source>
</evidence>
<accession>Q8Y288</accession>
<comment type="function">
    <text evidence="1">Catalyzes the NADPH-dependent reduction of 7-cyano-7-deazaguanine (preQ0) to 7-aminomethyl-7-deazaguanine (preQ1).</text>
</comment>
<comment type="catalytic activity">
    <reaction evidence="1">
        <text>7-aminomethyl-7-carbaguanine + 2 NADP(+) = 7-cyano-7-deazaguanine + 2 NADPH + 3 H(+)</text>
        <dbReference type="Rhea" id="RHEA:13409"/>
        <dbReference type="ChEBI" id="CHEBI:15378"/>
        <dbReference type="ChEBI" id="CHEBI:45075"/>
        <dbReference type="ChEBI" id="CHEBI:57783"/>
        <dbReference type="ChEBI" id="CHEBI:58349"/>
        <dbReference type="ChEBI" id="CHEBI:58703"/>
        <dbReference type="EC" id="1.7.1.13"/>
    </reaction>
</comment>
<comment type="pathway">
    <text evidence="1">tRNA modification; tRNA-queuosine biosynthesis.</text>
</comment>
<comment type="subunit">
    <text evidence="1">Homodimer.</text>
</comment>
<comment type="subcellular location">
    <subcellularLocation>
        <location evidence="1">Cytoplasm</location>
    </subcellularLocation>
</comment>
<comment type="similarity">
    <text evidence="1">Belongs to the GTP cyclohydrolase I family. QueF type 2 subfamily.</text>
</comment>